<protein>
    <recommendedName>
        <fullName evidence="6">DEK domain-containing chromatin-associated protein 1</fullName>
        <shortName evidence="7">At-DEK1</shortName>
        <shortName evidence="6">AtDEK-1</shortName>
        <shortName evidence="6">Protein DEK 1</shortName>
    </recommendedName>
</protein>
<dbReference type="EMBL" id="AL133315">
    <property type="protein sequence ID" value="CAB62360.1"/>
    <property type="molecule type" value="Genomic_DNA"/>
</dbReference>
<dbReference type="EMBL" id="CP002686">
    <property type="protein sequence ID" value="AEE78448.1"/>
    <property type="molecule type" value="Genomic_DNA"/>
</dbReference>
<dbReference type="EMBL" id="AK229882">
    <property type="protein sequence ID" value="BAF01711.1"/>
    <property type="molecule type" value="mRNA"/>
</dbReference>
<dbReference type="EMBL" id="AK229930">
    <property type="protein sequence ID" value="BAF01756.1"/>
    <property type="molecule type" value="mRNA"/>
</dbReference>
<dbReference type="EMBL" id="AK229931">
    <property type="protein sequence ID" value="BAF01757.1"/>
    <property type="molecule type" value="mRNA"/>
</dbReference>
<dbReference type="EMBL" id="AK229982">
    <property type="protein sequence ID" value="BAF01807.1"/>
    <property type="molecule type" value="mRNA"/>
</dbReference>
<dbReference type="EMBL" id="AK230134">
    <property type="protein sequence ID" value="BAF01949.1"/>
    <property type="molecule type" value="mRNA"/>
</dbReference>
<dbReference type="EMBL" id="BT029155">
    <property type="protein sequence ID" value="ABJ17090.1"/>
    <property type="molecule type" value="mRNA"/>
</dbReference>
<dbReference type="EMBL" id="AY084914">
    <property type="protein sequence ID" value="AAM61476.1"/>
    <property type="molecule type" value="mRNA"/>
</dbReference>
<dbReference type="PIR" id="T46215">
    <property type="entry name" value="T46215"/>
</dbReference>
<dbReference type="RefSeq" id="NP_190440.1">
    <property type="nucleotide sequence ID" value="NM_114730.3"/>
</dbReference>
<dbReference type="SMR" id="Q9SMM8"/>
<dbReference type="FunCoup" id="Q9SMM8">
    <property type="interactions" value="534"/>
</dbReference>
<dbReference type="STRING" id="3702.Q9SMM8"/>
<dbReference type="iPTMnet" id="Q9SMM8"/>
<dbReference type="PaxDb" id="3702-AT3G48710.1"/>
<dbReference type="ProteomicsDB" id="185769"/>
<dbReference type="EnsemblPlants" id="AT3G48710.1">
    <property type="protein sequence ID" value="AT3G48710.1"/>
    <property type="gene ID" value="AT3G48710"/>
</dbReference>
<dbReference type="GeneID" id="824032"/>
<dbReference type="Gramene" id="AT3G48710.1">
    <property type="protein sequence ID" value="AT3G48710.1"/>
    <property type="gene ID" value="AT3G48710"/>
</dbReference>
<dbReference type="KEGG" id="ath:AT3G48710"/>
<dbReference type="Araport" id="AT3G48710"/>
<dbReference type="TAIR" id="AT3G48710"/>
<dbReference type="eggNOG" id="KOG2266">
    <property type="taxonomic scope" value="Eukaryota"/>
</dbReference>
<dbReference type="HOGENOM" id="CLU_011980_2_0_1"/>
<dbReference type="InParanoid" id="Q9SMM8"/>
<dbReference type="OMA" id="MIKKAPT"/>
<dbReference type="OrthoDB" id="370884at2759"/>
<dbReference type="PhylomeDB" id="Q9SMM8"/>
<dbReference type="CD-CODE" id="4299E36E">
    <property type="entry name" value="Nucleolus"/>
</dbReference>
<dbReference type="PRO" id="PR:Q9SMM8"/>
<dbReference type="Proteomes" id="UP000006548">
    <property type="component" value="Chromosome 3"/>
</dbReference>
<dbReference type="ExpressionAtlas" id="Q9SMM8">
    <property type="expression patterns" value="baseline and differential"/>
</dbReference>
<dbReference type="GO" id="GO:0005829">
    <property type="term" value="C:cytosol"/>
    <property type="evidence" value="ECO:0007005"/>
    <property type="project" value="TAIR"/>
</dbReference>
<dbReference type="GO" id="GO:0005730">
    <property type="term" value="C:nucleolus"/>
    <property type="evidence" value="ECO:0000250"/>
    <property type="project" value="UniProtKB"/>
</dbReference>
<dbReference type="GO" id="GO:0005634">
    <property type="term" value="C:nucleus"/>
    <property type="evidence" value="ECO:0000250"/>
    <property type="project" value="UniProtKB"/>
</dbReference>
<dbReference type="GO" id="GO:0003682">
    <property type="term" value="F:chromatin binding"/>
    <property type="evidence" value="ECO:0000250"/>
    <property type="project" value="UniProtKB"/>
</dbReference>
<dbReference type="GO" id="GO:0003677">
    <property type="term" value="F:DNA binding"/>
    <property type="evidence" value="ECO:0007669"/>
    <property type="project" value="UniProtKB-KW"/>
</dbReference>
<dbReference type="GO" id="GO:0042393">
    <property type="term" value="F:histone binding"/>
    <property type="evidence" value="ECO:0000250"/>
    <property type="project" value="UniProtKB"/>
</dbReference>
<dbReference type="GO" id="GO:0006338">
    <property type="term" value="P:chromatin remodeling"/>
    <property type="evidence" value="ECO:0000250"/>
    <property type="project" value="UniProtKB"/>
</dbReference>
<dbReference type="GO" id="GO:0045892">
    <property type="term" value="P:negative regulation of DNA-templated transcription"/>
    <property type="evidence" value="ECO:0000250"/>
    <property type="project" value="UniProtKB"/>
</dbReference>
<dbReference type="GO" id="GO:0006355">
    <property type="term" value="P:regulation of DNA-templated transcription"/>
    <property type="evidence" value="ECO:0000250"/>
    <property type="project" value="UniProtKB"/>
</dbReference>
<dbReference type="FunFam" id="1.10.10.60:FF:000220">
    <property type="entry name" value="DEK domain-containing chromatin associated protein"/>
    <property type="match status" value="1"/>
</dbReference>
<dbReference type="Gene3D" id="1.10.10.60">
    <property type="entry name" value="Homeodomain-like"/>
    <property type="match status" value="1"/>
</dbReference>
<dbReference type="InterPro" id="IPR044198">
    <property type="entry name" value="DEK"/>
</dbReference>
<dbReference type="InterPro" id="IPR014876">
    <property type="entry name" value="DEK_C"/>
</dbReference>
<dbReference type="PANTHER" id="PTHR13468">
    <property type="entry name" value="DEK PROTEIN"/>
    <property type="match status" value="1"/>
</dbReference>
<dbReference type="PANTHER" id="PTHR13468:SF1">
    <property type="entry name" value="PROTEIN DEK"/>
    <property type="match status" value="1"/>
</dbReference>
<dbReference type="Pfam" id="PF08766">
    <property type="entry name" value="DEK_C"/>
    <property type="match status" value="1"/>
</dbReference>
<dbReference type="SUPFAM" id="SSF109715">
    <property type="entry name" value="DEK C-terminal domain"/>
    <property type="match status" value="1"/>
</dbReference>
<dbReference type="PROSITE" id="PS51998">
    <property type="entry name" value="DEK_C"/>
    <property type="match status" value="1"/>
</dbReference>
<gene>
    <name evidence="6" type="primary">DEK1</name>
    <name evidence="8" type="ordered locus">At3g48710</name>
    <name evidence="9" type="ORF">T8P19.220</name>
</gene>
<accession>Q9SMM8</accession>
<accession>A0A178VK90</accession>
<accession>Q0WMA0</accession>
<accession>Q8LFD2</accession>
<comment type="function">
    <text evidence="2">Chromatin-associated protein which contributes to the modulation of chromatin structure (such as super-helical structure of DNA) and function (By similarity). Binds to chromatin of protein-coding genes throughout the genome to regulate nucleosome occupancy and chromatin accessibility, and to modulate the expression of target genes (By similarity).</text>
</comment>
<comment type="subunit">
    <text evidence="2">Found in a mRNA splicing-dependent exon junction complex (EJC) (By similarity). Binds specifically histones H3 and H4 (By similarity).</text>
</comment>
<comment type="subcellular location">
    <subcellularLocation>
        <location evidence="3">Nucleus</location>
    </subcellularLocation>
    <subcellularLocation>
        <location evidence="2">Nucleus</location>
        <location evidence="2">Nucleolus</location>
    </subcellularLocation>
    <text evidence="1 2">Associates with chromatin (By similarity). Enriched in regions where chromatin is decondensed or sparse in the interphase nuclei (By similarity).</text>
</comment>
<feature type="chain" id="PRO_0000453264" description="DEK domain-containing chromatin-associated protein 1">
    <location>
        <begin position="1"/>
        <end position="462"/>
    </location>
</feature>
<feature type="domain" description="DEK-C" evidence="4">
    <location>
        <begin position="384"/>
        <end position="439"/>
    </location>
</feature>
<feature type="DNA-binding region" evidence="1">
    <location>
        <begin position="402"/>
        <end position="416"/>
    </location>
</feature>
<feature type="DNA-binding region" evidence="1">
    <location>
        <begin position="431"/>
        <end position="435"/>
    </location>
</feature>
<feature type="region of interest" description="Disordered" evidence="5">
    <location>
        <begin position="18"/>
        <end position="91"/>
    </location>
</feature>
<feature type="region of interest" description="Disordered" evidence="5">
    <location>
        <begin position="212"/>
        <end position="390"/>
    </location>
</feature>
<feature type="region of interest" description="Disordered" evidence="5">
    <location>
        <begin position="438"/>
        <end position="462"/>
    </location>
</feature>
<feature type="short sequence motif" description="Nuclear localization signal" evidence="3">
    <location>
        <begin position="344"/>
        <end position="351"/>
    </location>
</feature>
<feature type="compositionally biased region" description="Basic and acidic residues" evidence="5">
    <location>
        <begin position="20"/>
        <end position="32"/>
    </location>
</feature>
<feature type="compositionally biased region" description="Acidic residues" evidence="5">
    <location>
        <begin position="33"/>
        <end position="46"/>
    </location>
</feature>
<feature type="compositionally biased region" description="Polar residues" evidence="5">
    <location>
        <begin position="77"/>
        <end position="91"/>
    </location>
</feature>
<feature type="compositionally biased region" description="Acidic residues" evidence="5">
    <location>
        <begin position="267"/>
        <end position="276"/>
    </location>
</feature>
<feature type="compositionally biased region" description="Basic and acidic residues" evidence="5">
    <location>
        <begin position="277"/>
        <end position="303"/>
    </location>
</feature>
<feature type="compositionally biased region" description="Basic and acidic residues" evidence="5">
    <location>
        <begin position="312"/>
        <end position="322"/>
    </location>
</feature>
<feature type="compositionally biased region" description="Basic and acidic residues" evidence="5">
    <location>
        <begin position="347"/>
        <end position="360"/>
    </location>
</feature>
<feature type="compositionally biased region" description="Acidic residues" evidence="5">
    <location>
        <begin position="441"/>
        <end position="462"/>
    </location>
</feature>
<feature type="sequence conflict" description="In Ref. 5; AAM61476." evidence="7" ref="5">
    <original>A</original>
    <variation>T</variation>
    <location>
        <position position="2"/>
    </location>
</feature>
<feature type="sequence conflict" description="In Ref. 5; AAM61476." evidence="7" ref="5">
    <original>TEKDTETKKKDEVE</original>
    <variation>IEKDRETKKNDEVG</variation>
    <location>
        <begin position="20"/>
        <end position="33"/>
    </location>
</feature>
<feature type="sequence conflict" description="In Ref. 5; AAM61476." evidence="7" ref="5">
    <original>I</original>
    <variation>N</variation>
    <location>
        <position position="45"/>
    </location>
</feature>
<feature type="sequence conflict" description="In Ref. 5; AAM61476." evidence="7" ref="5">
    <original>S</original>
    <variation>L</variation>
    <location>
        <position position="52"/>
    </location>
</feature>
<feature type="sequence conflict" description="In Ref. 5; AAM61476." evidence="7" ref="5">
    <original>R</original>
    <variation>K</variation>
    <location>
        <position position="237"/>
    </location>
</feature>
<feature type="sequence conflict" description="In Ref. 5; AAM61476." evidence="7" ref="5">
    <original>N</original>
    <variation>T</variation>
    <location>
        <position position="267"/>
    </location>
</feature>
<feature type="sequence conflict" description="In Ref. 3; BAF01711/BAF01756." evidence="7" ref="3">
    <original>DEK</original>
    <variation>VER</variation>
    <location>
        <begin position="288"/>
        <end position="290"/>
    </location>
</feature>
<feature type="sequence conflict" description="In Ref. 5; AAM61476." evidence="7" ref="5">
    <original>T</original>
    <variation>I</variation>
    <location>
        <position position="300"/>
    </location>
</feature>
<feature type="sequence conflict" description="In Ref. 5; AAM61476." evidence="7" ref="5">
    <original>E</original>
    <variation>K</variation>
    <location>
        <position position="319"/>
    </location>
</feature>
<feature type="sequence conflict" description="In Ref. 5; AAM61476." evidence="7" ref="5">
    <original>F</original>
    <variation>S</variation>
    <location>
        <position position="333"/>
    </location>
</feature>
<feature type="sequence conflict" description="In Ref. 5; AAM61476." evidence="7" ref="5">
    <original>T</original>
    <variation>S</variation>
    <location>
        <position position="341"/>
    </location>
</feature>
<feature type="sequence conflict" description="In Ref. 5; AAM61476." evidence="7" ref="5">
    <original>D</original>
    <variation>E</variation>
    <location>
        <position position="443"/>
    </location>
</feature>
<name>DEKP1_ARATH</name>
<evidence type="ECO:0000250" key="1">
    <source>
        <dbReference type="UniProtKB" id="P35659"/>
    </source>
</evidence>
<evidence type="ECO:0000250" key="2">
    <source>
        <dbReference type="UniProtKB" id="Q9SUA1"/>
    </source>
</evidence>
<evidence type="ECO:0000255" key="3">
    <source>
        <dbReference type="PROSITE-ProRule" id="PRU00768"/>
    </source>
</evidence>
<evidence type="ECO:0000255" key="4">
    <source>
        <dbReference type="PROSITE-ProRule" id="PRU01342"/>
    </source>
</evidence>
<evidence type="ECO:0000256" key="5">
    <source>
        <dbReference type="SAM" id="MobiDB-lite"/>
    </source>
</evidence>
<evidence type="ECO:0000303" key="6">
    <source>
    </source>
</evidence>
<evidence type="ECO:0000305" key="7"/>
<evidence type="ECO:0000312" key="8">
    <source>
        <dbReference type="Araport" id="AT3G48710"/>
    </source>
</evidence>
<evidence type="ECO:0000312" key="9">
    <source>
        <dbReference type="EMBL" id="CAB62360.1"/>
    </source>
</evidence>
<organism>
    <name type="scientific">Arabidopsis thaliana</name>
    <name type="common">Mouse-ear cress</name>
    <dbReference type="NCBI Taxonomy" id="3702"/>
    <lineage>
        <taxon>Eukaryota</taxon>
        <taxon>Viridiplantae</taxon>
        <taxon>Streptophyta</taxon>
        <taxon>Embryophyta</taxon>
        <taxon>Tracheophyta</taxon>
        <taxon>Spermatophyta</taxon>
        <taxon>Magnoliopsida</taxon>
        <taxon>eudicotyledons</taxon>
        <taxon>Gunneridae</taxon>
        <taxon>Pentapetalae</taxon>
        <taxon>rosids</taxon>
        <taxon>malvids</taxon>
        <taxon>Brassicales</taxon>
        <taxon>Brassicaceae</taxon>
        <taxon>Camelineae</taxon>
        <taxon>Arabidopsis</taxon>
    </lineage>
</organism>
<proteinExistence type="evidence at protein level"/>
<sequence>MATETLELKTPQLADTVAVTEKDTETKKKDEVEKDEAMEEKGEEIDGEKVKSPVTPVSERPIRERKRTGRYVIDTPPRSSGNKPLSITQGRGTRLKEIPNVAYKLSKRKPDDNLFLLHTILYGKKAKAQMLKKNIGQFSGFVWSEQEEEKQRAKAKEKLDKCIKEKLIDFCDVLDIPVNKSTVKKEELAVRVLEFLVCPKATRDILLADSEKETKKRKKSTSKNVTSGESSHVPAKRRRQAKKQEQPTETEGNGESDVGSEGTNDSNGEDDVAPEEENNKSEDTETEDEKDKAKEKTKSTDKKRLSKRTKKEKPAAEEEKSIKGSAKSSRKSFRQVDKSTTSSSKKQKVDKDDSSKEKGKTQTSKPQAKGSKDQGQSRKKGKKEPTRKELHVVVTKILKEVDFNTATLSDILRKLGSHFGIDLMHRKAEVKDIITDAINEMSDDDDEKEEDTEDEGEKEGKD</sequence>
<keyword id="KW-0156">Chromatin regulator</keyword>
<keyword id="KW-0238">DNA-binding</keyword>
<keyword id="KW-0539">Nucleus</keyword>
<keyword id="KW-1185">Reference proteome</keyword>
<keyword id="KW-0804">Transcription</keyword>
<keyword id="KW-0805">Transcription regulation</keyword>
<reference key="1">
    <citation type="journal article" date="2000" name="Nature">
        <title>Sequence and analysis of chromosome 3 of the plant Arabidopsis thaliana.</title>
        <authorList>
            <person name="Salanoubat M."/>
            <person name="Lemcke K."/>
            <person name="Rieger M."/>
            <person name="Ansorge W."/>
            <person name="Unseld M."/>
            <person name="Fartmann B."/>
            <person name="Valle G."/>
            <person name="Bloecker H."/>
            <person name="Perez-Alonso M."/>
            <person name="Obermaier B."/>
            <person name="Delseny M."/>
            <person name="Boutry M."/>
            <person name="Grivell L.A."/>
            <person name="Mache R."/>
            <person name="Puigdomenech P."/>
            <person name="De Simone V."/>
            <person name="Choisne N."/>
            <person name="Artiguenave F."/>
            <person name="Robert C."/>
            <person name="Brottier P."/>
            <person name="Wincker P."/>
            <person name="Cattolico L."/>
            <person name="Weissenbach J."/>
            <person name="Saurin W."/>
            <person name="Quetier F."/>
            <person name="Schaefer M."/>
            <person name="Mueller-Auer S."/>
            <person name="Gabel C."/>
            <person name="Fuchs M."/>
            <person name="Benes V."/>
            <person name="Wurmbach E."/>
            <person name="Drzonek H."/>
            <person name="Erfle H."/>
            <person name="Jordan N."/>
            <person name="Bangert S."/>
            <person name="Wiedelmann R."/>
            <person name="Kranz H."/>
            <person name="Voss H."/>
            <person name="Holland R."/>
            <person name="Brandt P."/>
            <person name="Nyakatura G."/>
            <person name="Vezzi A."/>
            <person name="D'Angelo M."/>
            <person name="Pallavicini A."/>
            <person name="Toppo S."/>
            <person name="Simionati B."/>
            <person name="Conrad A."/>
            <person name="Hornischer K."/>
            <person name="Kauer G."/>
            <person name="Loehnert T.-H."/>
            <person name="Nordsiek G."/>
            <person name="Reichelt J."/>
            <person name="Scharfe M."/>
            <person name="Schoen O."/>
            <person name="Bargues M."/>
            <person name="Terol J."/>
            <person name="Climent J."/>
            <person name="Navarro P."/>
            <person name="Collado C."/>
            <person name="Perez-Perez A."/>
            <person name="Ottenwaelder B."/>
            <person name="Duchemin D."/>
            <person name="Cooke R."/>
            <person name="Laudie M."/>
            <person name="Berger-Llauro C."/>
            <person name="Purnelle B."/>
            <person name="Masuy D."/>
            <person name="de Haan M."/>
            <person name="Maarse A.C."/>
            <person name="Alcaraz J.-P."/>
            <person name="Cottet A."/>
            <person name="Casacuberta E."/>
            <person name="Monfort A."/>
            <person name="Argiriou A."/>
            <person name="Flores M."/>
            <person name="Liguori R."/>
            <person name="Vitale D."/>
            <person name="Mannhaupt G."/>
            <person name="Haase D."/>
            <person name="Schoof H."/>
            <person name="Rudd S."/>
            <person name="Zaccaria P."/>
            <person name="Mewes H.-W."/>
            <person name="Mayer K.F.X."/>
            <person name="Kaul S."/>
            <person name="Town C.D."/>
            <person name="Koo H.L."/>
            <person name="Tallon L.J."/>
            <person name="Jenkins J."/>
            <person name="Rooney T."/>
            <person name="Rizzo M."/>
            <person name="Walts A."/>
            <person name="Utterback T."/>
            <person name="Fujii C.Y."/>
            <person name="Shea T.P."/>
            <person name="Creasy T.H."/>
            <person name="Haas B."/>
            <person name="Maiti R."/>
            <person name="Wu D."/>
            <person name="Peterson J."/>
            <person name="Van Aken S."/>
            <person name="Pai G."/>
            <person name="Militscher J."/>
            <person name="Sellers P."/>
            <person name="Gill J.E."/>
            <person name="Feldblyum T.V."/>
            <person name="Preuss D."/>
            <person name="Lin X."/>
            <person name="Nierman W.C."/>
            <person name="Salzberg S.L."/>
            <person name="White O."/>
            <person name="Venter J.C."/>
            <person name="Fraser C.M."/>
            <person name="Kaneko T."/>
            <person name="Nakamura Y."/>
            <person name="Sato S."/>
            <person name="Kato T."/>
            <person name="Asamizu E."/>
            <person name="Sasamoto S."/>
            <person name="Kimura T."/>
            <person name="Idesawa K."/>
            <person name="Kawashima K."/>
            <person name="Kishida Y."/>
            <person name="Kiyokawa C."/>
            <person name="Kohara M."/>
            <person name="Matsumoto M."/>
            <person name="Matsuno A."/>
            <person name="Muraki A."/>
            <person name="Nakayama S."/>
            <person name="Nakazaki N."/>
            <person name="Shinpo S."/>
            <person name="Takeuchi C."/>
            <person name="Wada T."/>
            <person name="Watanabe A."/>
            <person name="Yamada M."/>
            <person name="Yasuda M."/>
            <person name="Tabata S."/>
        </authorList>
    </citation>
    <scope>NUCLEOTIDE SEQUENCE [LARGE SCALE GENOMIC DNA]</scope>
    <source>
        <strain>cv. Columbia</strain>
    </source>
</reference>
<reference key="2">
    <citation type="journal article" date="2017" name="Plant J.">
        <title>Araport11: a complete reannotation of the Arabidopsis thaliana reference genome.</title>
        <authorList>
            <person name="Cheng C.Y."/>
            <person name="Krishnakumar V."/>
            <person name="Chan A.P."/>
            <person name="Thibaud-Nissen F."/>
            <person name="Schobel S."/>
            <person name="Town C.D."/>
        </authorList>
    </citation>
    <scope>GENOME REANNOTATION</scope>
    <source>
        <strain>cv. Columbia</strain>
    </source>
</reference>
<reference key="3">
    <citation type="submission" date="2006-07" db="EMBL/GenBank/DDBJ databases">
        <title>Large-scale analysis of RIKEN Arabidopsis full-length (RAFL) cDNAs.</title>
        <authorList>
            <person name="Totoki Y."/>
            <person name="Seki M."/>
            <person name="Ishida J."/>
            <person name="Nakajima M."/>
            <person name="Enju A."/>
            <person name="Kamiya A."/>
            <person name="Narusaka M."/>
            <person name="Shin-i T."/>
            <person name="Nakagawa M."/>
            <person name="Sakamoto N."/>
            <person name="Oishi K."/>
            <person name="Kohara Y."/>
            <person name="Kobayashi M."/>
            <person name="Toyoda A."/>
            <person name="Sakaki Y."/>
            <person name="Sakurai T."/>
            <person name="Iida K."/>
            <person name="Akiyama K."/>
            <person name="Satou M."/>
            <person name="Toyoda T."/>
            <person name="Konagaya A."/>
            <person name="Carninci P."/>
            <person name="Kawai J."/>
            <person name="Hayashizaki Y."/>
            <person name="Shinozaki K."/>
        </authorList>
    </citation>
    <scope>NUCLEOTIDE SEQUENCE [LARGE SCALE MRNA]</scope>
    <source>
        <strain>cv. Columbia</strain>
    </source>
</reference>
<reference key="4">
    <citation type="submission" date="2006-10" db="EMBL/GenBank/DDBJ databases">
        <title>Arabidopsis ORF Clone.</title>
        <authorList>
            <person name="Bautista V.R."/>
            <person name="Kim C.J."/>
            <person name="Chen H."/>
            <person name="Quinitio C."/>
            <person name="Ecker J.R."/>
        </authorList>
    </citation>
    <scope>NUCLEOTIDE SEQUENCE [LARGE SCALE MRNA]</scope>
    <source>
        <strain>cv. Columbia</strain>
    </source>
</reference>
<reference key="5">
    <citation type="submission" date="2002-03" db="EMBL/GenBank/DDBJ databases">
        <title>Full-length cDNA from Arabidopsis thaliana.</title>
        <authorList>
            <person name="Brover V.V."/>
            <person name="Troukhan M.E."/>
            <person name="Alexandrov N.A."/>
            <person name="Lu Y.-P."/>
            <person name="Flavell R.B."/>
            <person name="Feldmann K.A."/>
        </authorList>
    </citation>
    <scope>NUCLEOTIDE SEQUENCE [LARGE SCALE MRNA]</scope>
</reference>
<reference key="6">
    <citation type="journal article" date="2005" name="Mol. Biol. Cell">
        <title>Proteomic analysis of the Arabidopsis nucleolus suggests novel nucleolar functions.</title>
        <authorList>
            <person name="Pendle A.F."/>
            <person name="Clark G.P."/>
            <person name="Boon R."/>
            <person name="Lewandowska D."/>
            <person name="Lam Y.W."/>
            <person name="Andersen J."/>
            <person name="Mann M."/>
            <person name="Lamond A.I."/>
            <person name="Brown J.W."/>
            <person name="Shaw P.J."/>
        </authorList>
    </citation>
    <scope>GENE FAMILY</scope>
    <scope>NOMENCLATURE</scope>
</reference>
<reference key="7">
    <citation type="journal article" date="2009" name="Plant Physiol.">
        <title>Large-scale Arabidopsis phosphoproteome profiling reveals novel chloroplast kinase substrates and phosphorylation networks.</title>
        <authorList>
            <person name="Reiland S."/>
            <person name="Messerli G."/>
            <person name="Baerenfaller K."/>
            <person name="Gerrits B."/>
            <person name="Endler A."/>
            <person name="Grossmann J."/>
            <person name="Gruissem W."/>
            <person name="Baginsky S."/>
        </authorList>
    </citation>
    <scope>IDENTIFICATION BY MASS SPECTROMETRY [LARGE SCALE ANALYSIS]</scope>
</reference>